<keyword id="KW-1185">Reference proteome</keyword>
<feature type="chain" id="PRO_0000323728" description="Protein DPCD">
    <location>
        <begin position="1"/>
        <end position="203"/>
    </location>
</feature>
<organism>
    <name type="scientific">Xenopus tropicalis</name>
    <name type="common">Western clawed frog</name>
    <name type="synonym">Silurana tropicalis</name>
    <dbReference type="NCBI Taxonomy" id="8364"/>
    <lineage>
        <taxon>Eukaryota</taxon>
        <taxon>Metazoa</taxon>
        <taxon>Chordata</taxon>
        <taxon>Craniata</taxon>
        <taxon>Vertebrata</taxon>
        <taxon>Euteleostomi</taxon>
        <taxon>Amphibia</taxon>
        <taxon>Batrachia</taxon>
        <taxon>Anura</taxon>
        <taxon>Pipoidea</taxon>
        <taxon>Pipidae</taxon>
        <taxon>Xenopodinae</taxon>
        <taxon>Xenopus</taxon>
        <taxon>Silurana</taxon>
    </lineage>
</organism>
<reference key="1">
    <citation type="submission" date="2007-03" db="EMBL/GenBank/DDBJ databases">
        <authorList>
            <consortium name="NIH - Xenopus Gene Collection (XGC) project"/>
        </authorList>
    </citation>
    <scope>NUCLEOTIDE SEQUENCE [LARGE SCALE MRNA]</scope>
    <source>
        <tissue>Embryo</tissue>
    </source>
</reference>
<gene>
    <name type="primary">dpcd</name>
</gene>
<sequence length="203" mass="23472">MALPSWLESLKAAQKTCILQDGRRKVHYLFSDGKEMAEEYDAKSHELLVRKWRQKSALGAYGQWQIEVGDPPLPVAGTIQSDFLKESSSNPTFTRKDTKSSFQWRIRNLPYAKEVYSVTVDKKDRCCIIRTTNKKYYKKFSIPDLDRCQLDLNENALSFAHANNTLIVTYQKPKEILSLEEELQRELKSLKTTNEGDVECKTQ</sequence>
<dbReference type="EMBL" id="BC135507">
    <property type="protein sequence ID" value="AAI35508.1"/>
    <property type="molecule type" value="mRNA"/>
</dbReference>
<dbReference type="RefSeq" id="NP_001096275.1">
    <property type="nucleotide sequence ID" value="NM_001102805.1"/>
</dbReference>
<dbReference type="FunCoup" id="A4IHF8">
    <property type="interactions" value="1835"/>
</dbReference>
<dbReference type="STRING" id="8364.ENSXETP00000020664"/>
<dbReference type="PaxDb" id="8364-ENSXETP00000063414"/>
<dbReference type="DNASU" id="100124840"/>
<dbReference type="GeneID" id="100124840"/>
<dbReference type="KEGG" id="xtr:100124840"/>
<dbReference type="AGR" id="Xenbase:XB-GENE-978025"/>
<dbReference type="CTD" id="25911"/>
<dbReference type="Xenbase" id="XB-GENE-978025">
    <property type="gene designation" value="dpcd"/>
</dbReference>
<dbReference type="eggNOG" id="ENOG502QUNA">
    <property type="taxonomic scope" value="Eukaryota"/>
</dbReference>
<dbReference type="HOGENOM" id="CLU_097313_0_0_1"/>
<dbReference type="InParanoid" id="A4IHF8"/>
<dbReference type="OMA" id="PILCEME"/>
<dbReference type="OrthoDB" id="10256139at2759"/>
<dbReference type="PhylomeDB" id="A4IHF8"/>
<dbReference type="TreeFam" id="TF324098"/>
<dbReference type="Proteomes" id="UP000008143">
    <property type="component" value="Chromosome 7"/>
</dbReference>
<dbReference type="Bgee" id="ENSXETG00000010773">
    <property type="expression patterns" value="Expressed in testis and 12 other cell types or tissues"/>
</dbReference>
<dbReference type="InterPro" id="IPR026224">
    <property type="entry name" value="DPCD"/>
</dbReference>
<dbReference type="PANTHER" id="PTHR31921">
    <property type="entry name" value="PROTEIN DPCD"/>
    <property type="match status" value="1"/>
</dbReference>
<dbReference type="PANTHER" id="PTHR31921:SF1">
    <property type="entry name" value="PROTEIN DPCD"/>
    <property type="match status" value="1"/>
</dbReference>
<dbReference type="Pfam" id="PF14913">
    <property type="entry name" value="DPCD"/>
    <property type="match status" value="1"/>
</dbReference>
<dbReference type="PRINTS" id="PR02065">
    <property type="entry name" value="PROTEINDPCD"/>
</dbReference>
<name>DPCD_XENTR</name>
<accession>A4IHF8</accession>
<comment type="similarity">
    <text evidence="1">Belongs to the DPCD family.</text>
</comment>
<evidence type="ECO:0000305" key="1"/>
<proteinExistence type="evidence at transcript level"/>
<protein>
    <recommendedName>
        <fullName>Protein DPCD</fullName>
    </recommendedName>
</protein>